<proteinExistence type="evidence at protein level"/>
<evidence type="ECO:0000255" key="1">
    <source>
        <dbReference type="PROSITE-ProRule" id="PRU00805"/>
    </source>
</evidence>
<evidence type="ECO:0000269" key="2">
    <source>
    </source>
</evidence>
<evidence type="ECO:0000269" key="3">
    <source>
    </source>
</evidence>
<evidence type="ECO:0000269" key="4">
    <source>
    </source>
</evidence>
<evidence type="ECO:0000303" key="5">
    <source>
    </source>
</evidence>
<evidence type="ECO:0000303" key="6">
    <source>
    </source>
</evidence>
<evidence type="ECO:0000305" key="7"/>
<evidence type="ECO:0000305" key="8">
    <source>
    </source>
</evidence>
<evidence type="ECO:0007744" key="9">
    <source>
    </source>
</evidence>
<evidence type="ECO:0007829" key="10">
    <source>
        <dbReference type="PDB" id="4BT9"/>
    </source>
</evidence>
<evidence type="ECO:0007829" key="11">
    <source>
        <dbReference type="PDB" id="4BTB"/>
    </source>
</evidence>
<keyword id="KW-0002">3D-structure</keyword>
<keyword id="KW-0025">Alternative splicing</keyword>
<keyword id="KW-0223">Dioxygenase</keyword>
<keyword id="KW-0256">Endoplasmic reticulum</keyword>
<keyword id="KW-0325">Glycoprotein</keyword>
<keyword id="KW-0408">Iron</keyword>
<keyword id="KW-0479">Metal-binding</keyword>
<keyword id="KW-0560">Oxidoreductase</keyword>
<keyword id="KW-1267">Proteomics identification</keyword>
<keyword id="KW-1185">Reference proteome</keyword>
<keyword id="KW-0732">Signal</keyword>
<keyword id="KW-0802">TPR repeat</keyword>
<keyword id="KW-0847">Vitamin C</keyword>
<feature type="signal peptide" evidence="9">
    <location>
        <begin position="1"/>
        <end position="17"/>
    </location>
</feature>
<feature type="chain" id="PRO_0000022723" description="Prolyl 4-hydroxylase subunit alpha-1">
    <location>
        <begin position="18"/>
        <end position="534"/>
    </location>
</feature>
<feature type="repeat" description="TPR">
    <location>
        <begin position="205"/>
        <end position="238"/>
    </location>
</feature>
<feature type="domain" description="Fe2OG dioxygenase" evidence="1">
    <location>
        <begin position="411"/>
        <end position="519"/>
    </location>
</feature>
<feature type="binding site" evidence="1">
    <location>
        <position position="429"/>
    </location>
    <ligand>
        <name>Fe cation</name>
        <dbReference type="ChEBI" id="CHEBI:24875"/>
    </ligand>
</feature>
<feature type="binding site" evidence="1">
    <location>
        <position position="431"/>
    </location>
    <ligand>
        <name>Fe cation</name>
        <dbReference type="ChEBI" id="CHEBI:24875"/>
    </ligand>
</feature>
<feature type="binding site" evidence="1">
    <location>
        <position position="500"/>
    </location>
    <ligand>
        <name>Fe cation</name>
        <dbReference type="ChEBI" id="CHEBI:24875"/>
    </ligand>
</feature>
<feature type="binding site" evidence="1">
    <location>
        <position position="510"/>
    </location>
    <ligand>
        <name>2-oxoglutarate</name>
        <dbReference type="ChEBI" id="CHEBI:16810"/>
    </ligand>
</feature>
<feature type="glycosylation site" description="N-linked (GlcNAc...) asparagine" evidence="3">
    <location>
        <position position="113"/>
    </location>
</feature>
<feature type="glycosylation site" description="N-linked (GlcNAc...) asparagine">
    <location>
        <position position="259"/>
    </location>
</feature>
<feature type="splice variant" id="VSP_004504" description="In isoform 2 and isoform 3." evidence="5 6">
    <original>RRATISNPITGDLETVHYRI</original>
    <variation>SRATVHDPETGKLTTAQYRV</variation>
    <location>
        <begin position="361"/>
        <end position="380"/>
    </location>
</feature>
<feature type="splice variant" id="VSP_044578" description="In isoform 3." evidence="5">
    <location>
        <begin position="417"/>
        <end position="434"/>
    </location>
</feature>
<feature type="mutagenesis site" description="Strongly reduced affinity for peptide substrate." evidence="2">
    <original>Y</original>
    <variation>A</variation>
    <location>
        <position position="210"/>
    </location>
</feature>
<feature type="mutagenesis site" description="Strongly reduced affinity for peptide substrate." evidence="2">
    <original>Y</original>
    <variation>A</variation>
    <location>
        <position position="213"/>
    </location>
</feature>
<feature type="mutagenesis site" description="Strongly reduced affinity for peptide substrate." evidence="2">
    <original>Y</original>
    <variation>A</variation>
    <location>
        <position position="247"/>
    </location>
</feature>
<feature type="sequence conflict" description="In Ref. 1; AAA36534/AAA36535." evidence="7" ref="1">
    <original>QYFP</original>
    <variation>PVLS</variation>
    <location>
        <begin position="119"/>
        <end position="122"/>
    </location>
</feature>
<feature type="helix" evidence="11">
    <location>
        <begin position="21"/>
        <end position="71"/>
    </location>
</feature>
<feature type="helix" evidence="10">
    <location>
        <begin position="74"/>
        <end position="79"/>
    </location>
</feature>
<feature type="helix" evidence="11">
    <location>
        <begin position="81"/>
        <end position="92"/>
    </location>
</feature>
<feature type="helix" evidence="11">
    <location>
        <begin position="94"/>
        <end position="103"/>
    </location>
</feature>
<feature type="helix" evidence="11">
    <location>
        <begin position="108"/>
        <end position="118"/>
    </location>
</feature>
<feature type="helix" evidence="11">
    <location>
        <begin position="124"/>
        <end position="141"/>
    </location>
</feature>
<feature type="helix" evidence="11">
    <location>
        <begin position="145"/>
        <end position="149"/>
    </location>
</feature>
<feature type="strand" evidence="11">
    <location>
        <begin position="153"/>
        <end position="156"/>
    </location>
</feature>
<feature type="helix" evidence="11">
    <location>
        <begin position="164"/>
        <end position="176"/>
    </location>
</feature>
<feature type="helix" evidence="11">
    <location>
        <begin position="180"/>
        <end position="195"/>
    </location>
</feature>
<feature type="helix" evidence="11">
    <location>
        <begin position="204"/>
        <end position="217"/>
    </location>
</feature>
<feature type="helix" evidence="11">
    <location>
        <begin position="221"/>
        <end position="234"/>
    </location>
</feature>
<feature type="helix" evidence="11">
    <location>
        <begin position="239"/>
        <end position="252"/>
    </location>
</feature>
<dbReference type="EC" id="1.14.11.2" evidence="4"/>
<dbReference type="EMBL" id="M24486">
    <property type="protein sequence ID" value="AAA36534.1"/>
    <property type="molecule type" value="mRNA"/>
</dbReference>
<dbReference type="EMBL" id="M24487">
    <property type="protein sequence ID" value="AAA36535.1"/>
    <property type="molecule type" value="mRNA"/>
</dbReference>
<dbReference type="EMBL" id="U14620">
    <property type="protein sequence ID" value="AAA59068.1"/>
    <property type="molecule type" value="Genomic_DNA"/>
</dbReference>
<dbReference type="EMBL" id="U14607">
    <property type="protein sequence ID" value="AAA59068.1"/>
    <property type="status" value="JOINED"/>
    <property type="molecule type" value="Genomic_DNA"/>
</dbReference>
<dbReference type="EMBL" id="U14605">
    <property type="protein sequence ID" value="AAA59068.1"/>
    <property type="status" value="JOINED"/>
    <property type="molecule type" value="Genomic_DNA"/>
</dbReference>
<dbReference type="EMBL" id="U14608">
    <property type="protein sequence ID" value="AAA59068.1"/>
    <property type="status" value="JOINED"/>
    <property type="molecule type" value="Genomic_DNA"/>
</dbReference>
<dbReference type="EMBL" id="U14609">
    <property type="protein sequence ID" value="AAA59068.1"/>
    <property type="status" value="JOINED"/>
    <property type="molecule type" value="Genomic_DNA"/>
</dbReference>
<dbReference type="EMBL" id="U14611">
    <property type="protein sequence ID" value="AAA59068.1"/>
    <property type="status" value="JOINED"/>
    <property type="molecule type" value="Genomic_DNA"/>
</dbReference>
<dbReference type="EMBL" id="U14610">
    <property type="protein sequence ID" value="AAA59068.1"/>
    <property type="status" value="JOINED"/>
    <property type="molecule type" value="Genomic_DNA"/>
</dbReference>
<dbReference type="EMBL" id="U14612">
    <property type="protein sequence ID" value="AAA59068.1"/>
    <property type="status" value="JOINED"/>
    <property type="molecule type" value="Genomic_DNA"/>
</dbReference>
<dbReference type="EMBL" id="U14614">
    <property type="protein sequence ID" value="AAA59068.1"/>
    <property type="status" value="JOINED"/>
    <property type="molecule type" value="Genomic_DNA"/>
</dbReference>
<dbReference type="EMBL" id="U14615">
    <property type="protein sequence ID" value="AAA59068.1"/>
    <property type="status" value="JOINED"/>
    <property type="molecule type" value="Genomic_DNA"/>
</dbReference>
<dbReference type="EMBL" id="U14616">
    <property type="protein sequence ID" value="AAA59068.1"/>
    <property type="status" value="JOINED"/>
    <property type="molecule type" value="Genomic_DNA"/>
</dbReference>
<dbReference type="EMBL" id="U14617">
    <property type="protein sequence ID" value="AAA59068.1"/>
    <property type="status" value="JOINED"/>
    <property type="molecule type" value="Genomic_DNA"/>
</dbReference>
<dbReference type="EMBL" id="U14618">
    <property type="protein sequence ID" value="AAA59068.1"/>
    <property type="status" value="JOINED"/>
    <property type="molecule type" value="Genomic_DNA"/>
</dbReference>
<dbReference type="EMBL" id="U14619">
    <property type="protein sequence ID" value="AAA59068.1"/>
    <property type="status" value="JOINED"/>
    <property type="molecule type" value="Genomic_DNA"/>
</dbReference>
<dbReference type="EMBL" id="U14620">
    <property type="protein sequence ID" value="AAA59069.1"/>
    <property type="molecule type" value="Genomic_DNA"/>
</dbReference>
<dbReference type="EMBL" id="U14607">
    <property type="protein sequence ID" value="AAA59069.1"/>
    <property type="status" value="JOINED"/>
    <property type="molecule type" value="Genomic_DNA"/>
</dbReference>
<dbReference type="EMBL" id="U14605">
    <property type="protein sequence ID" value="AAA59069.1"/>
    <property type="status" value="JOINED"/>
    <property type="molecule type" value="Genomic_DNA"/>
</dbReference>
<dbReference type="EMBL" id="U14608">
    <property type="protein sequence ID" value="AAA59069.1"/>
    <property type="status" value="JOINED"/>
    <property type="molecule type" value="Genomic_DNA"/>
</dbReference>
<dbReference type="EMBL" id="U14609">
    <property type="protein sequence ID" value="AAA59069.1"/>
    <property type="status" value="JOINED"/>
    <property type="molecule type" value="Genomic_DNA"/>
</dbReference>
<dbReference type="EMBL" id="U14611">
    <property type="protein sequence ID" value="AAA59069.1"/>
    <property type="status" value="JOINED"/>
    <property type="molecule type" value="Genomic_DNA"/>
</dbReference>
<dbReference type="EMBL" id="U14610">
    <property type="protein sequence ID" value="AAA59069.1"/>
    <property type="status" value="JOINED"/>
    <property type="molecule type" value="Genomic_DNA"/>
</dbReference>
<dbReference type="EMBL" id="U14612">
    <property type="protein sequence ID" value="AAA59069.1"/>
    <property type="status" value="JOINED"/>
    <property type="molecule type" value="Genomic_DNA"/>
</dbReference>
<dbReference type="EMBL" id="U14613">
    <property type="protein sequence ID" value="AAA59069.1"/>
    <property type="status" value="JOINED"/>
    <property type="molecule type" value="Genomic_DNA"/>
</dbReference>
<dbReference type="EMBL" id="U14615">
    <property type="protein sequence ID" value="AAA59069.1"/>
    <property type="status" value="JOINED"/>
    <property type="molecule type" value="Genomic_DNA"/>
</dbReference>
<dbReference type="EMBL" id="U14616">
    <property type="protein sequence ID" value="AAA59069.1"/>
    <property type="status" value="JOINED"/>
    <property type="molecule type" value="Genomic_DNA"/>
</dbReference>
<dbReference type="EMBL" id="U14617">
    <property type="protein sequence ID" value="AAA59069.1"/>
    <property type="status" value="JOINED"/>
    <property type="molecule type" value="Genomic_DNA"/>
</dbReference>
<dbReference type="EMBL" id="U14618">
    <property type="protein sequence ID" value="AAA59069.1"/>
    <property type="status" value="JOINED"/>
    <property type="molecule type" value="Genomic_DNA"/>
</dbReference>
<dbReference type="EMBL" id="U14619">
    <property type="protein sequence ID" value="AAA59069.1"/>
    <property type="status" value="JOINED"/>
    <property type="molecule type" value="Genomic_DNA"/>
</dbReference>
<dbReference type="EMBL" id="CD013929">
    <property type="status" value="NOT_ANNOTATED_CDS"/>
    <property type="molecule type" value="Genomic_DNA"/>
</dbReference>
<dbReference type="EMBL" id="AL731563">
    <property type="status" value="NOT_ANNOTATED_CDS"/>
    <property type="molecule type" value="Genomic_DNA"/>
</dbReference>
<dbReference type="EMBL" id="BC034998">
    <property type="protein sequence ID" value="AAH34998.1"/>
    <property type="molecule type" value="mRNA"/>
</dbReference>
<dbReference type="CCDS" id="CCDS41537.1">
    <molecule id="P13674-1"/>
</dbReference>
<dbReference type="CCDS" id="CCDS44432.1">
    <molecule id="P13674-3"/>
</dbReference>
<dbReference type="CCDS" id="CCDS7320.1">
    <molecule id="P13674-2"/>
</dbReference>
<dbReference type="PIR" id="A33919">
    <property type="entry name" value="DAHUA1"/>
</dbReference>
<dbReference type="PIR" id="I37173">
    <property type="entry name" value="DAHUA2"/>
</dbReference>
<dbReference type="RefSeq" id="NP_000908.2">
    <molecule id="P13674-2"/>
    <property type="nucleotide sequence ID" value="NM_000917.4"/>
</dbReference>
<dbReference type="RefSeq" id="NP_001017962.1">
    <molecule id="P13674-1"/>
    <property type="nucleotide sequence ID" value="NM_001017962.3"/>
</dbReference>
<dbReference type="RefSeq" id="NP_001136067.1">
    <molecule id="P13674-1"/>
    <property type="nucleotide sequence ID" value="NM_001142595.2"/>
</dbReference>
<dbReference type="RefSeq" id="NP_001136068.1">
    <molecule id="P13674-3"/>
    <property type="nucleotide sequence ID" value="NM_001142596.2"/>
</dbReference>
<dbReference type="PDB" id="1TJC">
    <property type="method" value="X-ray"/>
    <property type="resolution" value="2.30 A"/>
    <property type="chains" value="A/B=161-261"/>
</dbReference>
<dbReference type="PDB" id="2V5F">
    <property type="method" value="X-ray"/>
    <property type="resolution" value="2.03 A"/>
    <property type="chains" value="A=161-263"/>
</dbReference>
<dbReference type="PDB" id="2YQ8">
    <property type="method" value="X-ray"/>
    <property type="resolution" value="2.99 A"/>
    <property type="chains" value="A/B=18-255"/>
</dbReference>
<dbReference type="PDB" id="4BT8">
    <property type="method" value="X-ray"/>
    <property type="resolution" value="2.20 A"/>
    <property type="chains" value="A/B=18-255"/>
</dbReference>
<dbReference type="PDB" id="4BT9">
    <property type="method" value="X-ray"/>
    <property type="resolution" value="1.90 A"/>
    <property type="chains" value="A/B=18-255"/>
</dbReference>
<dbReference type="PDB" id="4BTA">
    <property type="method" value="X-ray"/>
    <property type="resolution" value="2.95 A"/>
    <property type="chains" value="A/B=18-261"/>
</dbReference>
<dbReference type="PDB" id="4BTB">
    <property type="method" value="X-ray"/>
    <property type="resolution" value="1.90 A"/>
    <property type="chains" value="A=18-255"/>
</dbReference>
<dbReference type="PDBsum" id="1TJC"/>
<dbReference type="PDBsum" id="2V5F"/>
<dbReference type="PDBsum" id="2YQ8"/>
<dbReference type="PDBsum" id="4BT8"/>
<dbReference type="PDBsum" id="4BT9"/>
<dbReference type="PDBsum" id="4BTA"/>
<dbReference type="PDBsum" id="4BTB"/>
<dbReference type="SMR" id="P13674"/>
<dbReference type="BioGRID" id="111072">
    <property type="interactions" value="315"/>
</dbReference>
<dbReference type="CORUM" id="P13674"/>
<dbReference type="DIP" id="DIP-38180N"/>
<dbReference type="FunCoup" id="P13674">
    <property type="interactions" value="1913"/>
</dbReference>
<dbReference type="IntAct" id="P13674">
    <property type="interactions" value="153"/>
</dbReference>
<dbReference type="MINT" id="P13674"/>
<dbReference type="STRING" id="9606.ENSP00000263556"/>
<dbReference type="BindingDB" id="P13674"/>
<dbReference type="ChEMBL" id="CHEMBL1250350"/>
<dbReference type="DrugBank" id="DB00126">
    <property type="generic name" value="Ascorbic acid"/>
</dbReference>
<dbReference type="DrugBank" id="DB01275">
    <property type="generic name" value="Hydralazine"/>
</dbReference>
<dbReference type="DrugBank" id="DB00172">
    <property type="generic name" value="Proline"/>
</dbReference>
<dbReference type="DrugBank" id="DB00139">
    <property type="generic name" value="Succinic acid"/>
</dbReference>
<dbReference type="DrugCentral" id="P13674"/>
<dbReference type="GlyConnect" id="1640">
    <property type="glycosylation" value="9 N-Linked glycans (1 site)"/>
</dbReference>
<dbReference type="GlyCosmos" id="P13674">
    <property type="glycosylation" value="2 sites, 8 glycans"/>
</dbReference>
<dbReference type="GlyGen" id="P13674">
    <property type="glycosylation" value="4 sites, 24 N-linked glycans (2 sites), 2 O-linked glycans (2 sites)"/>
</dbReference>
<dbReference type="iPTMnet" id="P13674"/>
<dbReference type="MetOSite" id="P13674"/>
<dbReference type="PhosphoSitePlus" id="P13674"/>
<dbReference type="SwissPalm" id="P13674"/>
<dbReference type="BioMuta" id="P4HA1"/>
<dbReference type="DMDM" id="2507090"/>
<dbReference type="jPOST" id="P13674"/>
<dbReference type="MassIVE" id="P13674"/>
<dbReference type="PaxDb" id="9606-ENSP00000263556"/>
<dbReference type="PeptideAtlas" id="P13674"/>
<dbReference type="ProteomicsDB" id="10641"/>
<dbReference type="ProteomicsDB" id="52957">
    <molecule id="P13674-1"/>
</dbReference>
<dbReference type="ProteomicsDB" id="52958">
    <molecule id="P13674-2"/>
</dbReference>
<dbReference type="Pumba" id="P13674"/>
<dbReference type="Antibodypedia" id="2000">
    <property type="antibodies" value="250 antibodies from 32 providers"/>
</dbReference>
<dbReference type="DNASU" id="5033"/>
<dbReference type="Ensembl" id="ENST00000263556.3">
    <molecule id="P13674-2"/>
    <property type="protein sequence ID" value="ENSP00000263556.3"/>
    <property type="gene ID" value="ENSG00000122884.13"/>
</dbReference>
<dbReference type="Ensembl" id="ENST00000307116.6">
    <molecule id="P13674-1"/>
    <property type="protein sequence ID" value="ENSP00000307318.2"/>
    <property type="gene ID" value="ENSG00000122884.13"/>
</dbReference>
<dbReference type="Ensembl" id="ENST00000373008.7">
    <molecule id="P13674-2"/>
    <property type="protein sequence ID" value="ENSP00000362099.1"/>
    <property type="gene ID" value="ENSG00000122884.13"/>
</dbReference>
<dbReference type="Ensembl" id="ENST00000394890.7">
    <molecule id="P13674-1"/>
    <property type="protein sequence ID" value="ENSP00000378353.2"/>
    <property type="gene ID" value="ENSG00000122884.13"/>
</dbReference>
<dbReference type="Ensembl" id="ENST00000440381.5">
    <molecule id="P13674-3"/>
    <property type="protein sequence ID" value="ENSP00000414464.1"/>
    <property type="gene ID" value="ENSG00000122884.13"/>
</dbReference>
<dbReference type="GeneID" id="5033"/>
<dbReference type="KEGG" id="hsa:5033"/>
<dbReference type="MANE-Select" id="ENST00000394890.7">
    <property type="protein sequence ID" value="ENSP00000378353.2"/>
    <property type="RefSeq nucleotide sequence ID" value="NM_001017962.3"/>
    <property type="RefSeq protein sequence ID" value="NP_001017962.1"/>
</dbReference>
<dbReference type="UCSC" id="uc001jtg.4">
    <molecule id="P13674-1"/>
    <property type="organism name" value="human"/>
</dbReference>
<dbReference type="AGR" id="HGNC:8546"/>
<dbReference type="CTD" id="5033"/>
<dbReference type="DisGeNET" id="5033"/>
<dbReference type="GeneCards" id="P4HA1"/>
<dbReference type="HGNC" id="HGNC:8546">
    <property type="gene designation" value="P4HA1"/>
</dbReference>
<dbReference type="HPA" id="ENSG00000122884">
    <property type="expression patterns" value="Low tissue specificity"/>
</dbReference>
<dbReference type="MalaCards" id="P4HA1"/>
<dbReference type="MIM" id="176710">
    <property type="type" value="gene"/>
</dbReference>
<dbReference type="neXtProt" id="NX_P13674"/>
<dbReference type="OpenTargets" id="ENSG00000122884"/>
<dbReference type="PharmGKB" id="PA32874"/>
<dbReference type="VEuPathDB" id="HostDB:ENSG00000122884"/>
<dbReference type="eggNOG" id="KOG1591">
    <property type="taxonomic scope" value="Eukaryota"/>
</dbReference>
<dbReference type="GeneTree" id="ENSGT00940000156635"/>
<dbReference type="HOGENOM" id="CLU_024155_1_1_1"/>
<dbReference type="InParanoid" id="P13674"/>
<dbReference type="OMA" id="YLPHFDF"/>
<dbReference type="OrthoDB" id="420380at2759"/>
<dbReference type="PAN-GO" id="P13674">
    <property type="GO annotations" value="3 GO annotations based on evolutionary models"/>
</dbReference>
<dbReference type="PhylomeDB" id="P13674"/>
<dbReference type="TreeFam" id="TF313393"/>
<dbReference type="BioCyc" id="MetaCyc:HS04613-MONOMER"/>
<dbReference type="BRENDA" id="1.14.11.2">
    <property type="organism ID" value="2681"/>
</dbReference>
<dbReference type="PathwayCommons" id="P13674"/>
<dbReference type="Reactome" id="R-HSA-1650814">
    <property type="pathway name" value="Collagen biosynthesis and modifying enzymes"/>
</dbReference>
<dbReference type="SignaLink" id="P13674"/>
<dbReference type="BioGRID-ORCS" id="5033">
    <property type="hits" value="25 hits in 1163 CRISPR screens"/>
</dbReference>
<dbReference type="ChiTaRS" id="P4HA1">
    <property type="organism name" value="human"/>
</dbReference>
<dbReference type="EvolutionaryTrace" id="P13674"/>
<dbReference type="GeneWiki" id="P4HA1"/>
<dbReference type="GenomeRNAi" id="5033"/>
<dbReference type="Pharos" id="P13674">
    <property type="development level" value="Tchem"/>
</dbReference>
<dbReference type="PRO" id="PR:P13674"/>
<dbReference type="Proteomes" id="UP000005640">
    <property type="component" value="Chromosome 10"/>
</dbReference>
<dbReference type="RNAct" id="P13674">
    <property type="molecule type" value="protein"/>
</dbReference>
<dbReference type="Bgee" id="ENSG00000122884">
    <property type="expression patterns" value="Expressed in cartilage tissue and 207 other cell types or tissues"/>
</dbReference>
<dbReference type="ExpressionAtlas" id="P13674">
    <property type="expression patterns" value="baseline and differential"/>
</dbReference>
<dbReference type="GO" id="GO:0005783">
    <property type="term" value="C:endoplasmic reticulum"/>
    <property type="evidence" value="ECO:0000314"/>
    <property type="project" value="HPA"/>
</dbReference>
<dbReference type="GO" id="GO:0005788">
    <property type="term" value="C:endoplasmic reticulum lumen"/>
    <property type="evidence" value="ECO:0000304"/>
    <property type="project" value="Reactome"/>
</dbReference>
<dbReference type="GO" id="GO:0043231">
    <property type="term" value="C:intracellular membrane-bounded organelle"/>
    <property type="evidence" value="ECO:0000314"/>
    <property type="project" value="HPA"/>
</dbReference>
<dbReference type="GO" id="GO:0016020">
    <property type="term" value="C:membrane"/>
    <property type="evidence" value="ECO:0007005"/>
    <property type="project" value="UniProtKB"/>
</dbReference>
<dbReference type="GO" id="GO:0005739">
    <property type="term" value="C:mitochondrion"/>
    <property type="evidence" value="ECO:0000314"/>
    <property type="project" value="HPA"/>
</dbReference>
<dbReference type="GO" id="GO:0016222">
    <property type="term" value="C:procollagen-proline 4-dioxygenase complex"/>
    <property type="evidence" value="ECO:0007669"/>
    <property type="project" value="Ensembl"/>
</dbReference>
<dbReference type="GO" id="GO:0042802">
    <property type="term" value="F:identical protein binding"/>
    <property type="evidence" value="ECO:0000353"/>
    <property type="project" value="IntAct"/>
</dbReference>
<dbReference type="GO" id="GO:0005506">
    <property type="term" value="F:iron ion binding"/>
    <property type="evidence" value="ECO:0007669"/>
    <property type="project" value="InterPro"/>
</dbReference>
<dbReference type="GO" id="GO:0031418">
    <property type="term" value="F:L-ascorbic acid binding"/>
    <property type="evidence" value="ECO:0007669"/>
    <property type="project" value="UniProtKB-KW"/>
</dbReference>
<dbReference type="GO" id="GO:0004656">
    <property type="term" value="F:procollagen-proline 4-dioxygenase activity"/>
    <property type="evidence" value="ECO:0000314"/>
    <property type="project" value="UniProtKB"/>
</dbReference>
<dbReference type="GO" id="GO:0030199">
    <property type="term" value="P:collagen fibril organization"/>
    <property type="evidence" value="ECO:0000318"/>
    <property type="project" value="GO_Central"/>
</dbReference>
<dbReference type="FunFam" id="1.25.40.10:FF:000006">
    <property type="entry name" value="Prolyl 4-hydroxylase subunit alpha 2"/>
    <property type="match status" value="1"/>
</dbReference>
<dbReference type="FunFam" id="2.60.120.620:FF:000001">
    <property type="entry name" value="Prolyl 4-hydroxylase subunit alpha 2"/>
    <property type="match status" value="1"/>
</dbReference>
<dbReference type="Gene3D" id="6.10.140.1460">
    <property type="match status" value="1"/>
</dbReference>
<dbReference type="Gene3D" id="2.60.120.620">
    <property type="entry name" value="q2cbj1_9rhob like domain"/>
    <property type="match status" value="1"/>
</dbReference>
<dbReference type="Gene3D" id="1.25.40.10">
    <property type="entry name" value="Tetratricopeptide repeat domain"/>
    <property type="match status" value="1"/>
</dbReference>
<dbReference type="InterPro" id="IPR005123">
    <property type="entry name" value="Oxoglu/Fe-dep_dioxygenase_dom"/>
</dbReference>
<dbReference type="InterPro" id="IPR045054">
    <property type="entry name" value="P4HA-like"/>
</dbReference>
<dbReference type="InterPro" id="IPR006620">
    <property type="entry name" value="Pro_4_hyd_alph"/>
</dbReference>
<dbReference type="InterPro" id="IPR044862">
    <property type="entry name" value="Pro_4_hyd_alph_FE2OG_OXY"/>
</dbReference>
<dbReference type="InterPro" id="IPR013547">
    <property type="entry name" value="Pro_4_hyd_alph_N"/>
</dbReference>
<dbReference type="InterPro" id="IPR011990">
    <property type="entry name" value="TPR-like_helical_dom_sf"/>
</dbReference>
<dbReference type="InterPro" id="IPR019734">
    <property type="entry name" value="TPR_rpt"/>
</dbReference>
<dbReference type="PANTHER" id="PTHR10869">
    <property type="entry name" value="PROLYL 4-HYDROXYLASE ALPHA SUBUNIT"/>
    <property type="match status" value="1"/>
</dbReference>
<dbReference type="PANTHER" id="PTHR10869:SF101">
    <property type="entry name" value="PROLYL 4-HYDROXYLASE SUBUNIT ALPHA-1"/>
    <property type="match status" value="1"/>
</dbReference>
<dbReference type="Pfam" id="PF13640">
    <property type="entry name" value="2OG-FeII_Oxy_3"/>
    <property type="match status" value="1"/>
</dbReference>
<dbReference type="Pfam" id="PF08336">
    <property type="entry name" value="P4Ha_N"/>
    <property type="match status" value="1"/>
</dbReference>
<dbReference type="Pfam" id="PF23558">
    <property type="entry name" value="TPR_P4H"/>
    <property type="match status" value="1"/>
</dbReference>
<dbReference type="SMART" id="SM00702">
    <property type="entry name" value="P4Hc"/>
    <property type="match status" value="1"/>
</dbReference>
<dbReference type="SUPFAM" id="SSF48452">
    <property type="entry name" value="TPR-like"/>
    <property type="match status" value="1"/>
</dbReference>
<dbReference type="PROSITE" id="PS51471">
    <property type="entry name" value="FE2OG_OXY"/>
    <property type="match status" value="1"/>
</dbReference>
<dbReference type="PROSITE" id="PS50005">
    <property type="entry name" value="TPR"/>
    <property type="match status" value="1"/>
</dbReference>
<dbReference type="PROSITE" id="PS50293">
    <property type="entry name" value="TPR_REGION"/>
    <property type="match status" value="1"/>
</dbReference>
<reference key="1">
    <citation type="journal article" date="1989" name="Proc. Natl. Acad. Sci. U.S.A.">
        <title>Molecular cloning of the alpha-subunit of human prolyl 4-hydroxylase: the complete cDNA-derived amino acid sequence and evidence for alternative splicing of RNA transcripts.</title>
        <authorList>
            <person name="Helaakoski T."/>
            <person name="Vuori K."/>
            <person name="Myllylae R."/>
            <person name="Kivirikko K.I."/>
            <person name="Pihlajaniemi T."/>
        </authorList>
    </citation>
    <scope>NUCLEOTIDE SEQUENCE [MRNA] (ISOFORMS 1 AND 2)</scope>
</reference>
<reference key="2">
    <citation type="journal article" date="1994" name="J. Biol. Chem.">
        <title>Structure and expression of the human gene for the alpha subunit of prolyl 4-hydroxylase. The two alternatively spliced types of mRNA correspond to two homologous exons the sequences of which are expressed in a variety of tissues.</title>
        <authorList>
            <person name="Helaakoski T."/>
            <person name="Veijola J."/>
            <person name="Vuori K."/>
            <person name="Rehn M."/>
            <person name="Chow L.T."/>
            <person name="Taillon-Miller P."/>
            <person name="Kivirikko K.I."/>
            <person name="Pihlajaniemi T."/>
        </authorList>
    </citation>
    <scope>NUCLEOTIDE SEQUENCE [GENOMIC DNA]</scope>
    <scope>ALTERNATIVE SPLICING</scope>
</reference>
<reference key="3">
    <citation type="journal article" date="2004" name="Genomics">
        <title>PCR isolation and cloning of novel splice variant mRNAs from known drug target genes.</title>
        <authorList>
            <person name="Jin P."/>
            <person name="Fu G.K."/>
            <person name="Wilson A.D."/>
            <person name="Yang J."/>
            <person name="Chien D."/>
            <person name="Hawkins P.R."/>
            <person name="Au-Young J."/>
            <person name="Stuve L.L."/>
        </authorList>
    </citation>
    <scope>NUCLEOTIDE SEQUENCE [LARGE SCALE MRNA] (ISOFORM 3)</scope>
</reference>
<reference key="4">
    <citation type="journal article" date="2004" name="Nature">
        <title>The DNA sequence and comparative analysis of human chromosome 10.</title>
        <authorList>
            <person name="Deloukas P."/>
            <person name="Earthrowl M.E."/>
            <person name="Grafham D.V."/>
            <person name="Rubenfield M."/>
            <person name="French L."/>
            <person name="Steward C.A."/>
            <person name="Sims S.K."/>
            <person name="Jones M.C."/>
            <person name="Searle S."/>
            <person name="Scott C."/>
            <person name="Howe K."/>
            <person name="Hunt S.E."/>
            <person name="Andrews T.D."/>
            <person name="Gilbert J.G.R."/>
            <person name="Swarbreck D."/>
            <person name="Ashurst J.L."/>
            <person name="Taylor A."/>
            <person name="Battles J."/>
            <person name="Bird C.P."/>
            <person name="Ainscough R."/>
            <person name="Almeida J.P."/>
            <person name="Ashwell R.I.S."/>
            <person name="Ambrose K.D."/>
            <person name="Babbage A.K."/>
            <person name="Bagguley C.L."/>
            <person name="Bailey J."/>
            <person name="Banerjee R."/>
            <person name="Bates K."/>
            <person name="Beasley H."/>
            <person name="Bray-Allen S."/>
            <person name="Brown A.J."/>
            <person name="Brown J.Y."/>
            <person name="Burford D.C."/>
            <person name="Burrill W."/>
            <person name="Burton J."/>
            <person name="Cahill P."/>
            <person name="Camire D."/>
            <person name="Carter N.P."/>
            <person name="Chapman J.C."/>
            <person name="Clark S.Y."/>
            <person name="Clarke G."/>
            <person name="Clee C.M."/>
            <person name="Clegg S."/>
            <person name="Corby N."/>
            <person name="Coulson A."/>
            <person name="Dhami P."/>
            <person name="Dutta I."/>
            <person name="Dunn M."/>
            <person name="Faulkner L."/>
            <person name="Frankish A."/>
            <person name="Frankland J.A."/>
            <person name="Garner P."/>
            <person name="Garnett J."/>
            <person name="Gribble S."/>
            <person name="Griffiths C."/>
            <person name="Grocock R."/>
            <person name="Gustafson E."/>
            <person name="Hammond S."/>
            <person name="Harley J.L."/>
            <person name="Hart E."/>
            <person name="Heath P.D."/>
            <person name="Ho T.P."/>
            <person name="Hopkins B."/>
            <person name="Horne J."/>
            <person name="Howden P.J."/>
            <person name="Huckle E."/>
            <person name="Hynds C."/>
            <person name="Johnson C."/>
            <person name="Johnson D."/>
            <person name="Kana A."/>
            <person name="Kay M."/>
            <person name="Kimberley A.M."/>
            <person name="Kershaw J.K."/>
            <person name="Kokkinaki M."/>
            <person name="Laird G.K."/>
            <person name="Lawlor S."/>
            <person name="Lee H.M."/>
            <person name="Leongamornlert D.A."/>
            <person name="Laird G."/>
            <person name="Lloyd C."/>
            <person name="Lloyd D.M."/>
            <person name="Loveland J."/>
            <person name="Lovell J."/>
            <person name="McLaren S."/>
            <person name="McLay K.E."/>
            <person name="McMurray A."/>
            <person name="Mashreghi-Mohammadi M."/>
            <person name="Matthews L."/>
            <person name="Milne S."/>
            <person name="Nickerson T."/>
            <person name="Nguyen M."/>
            <person name="Overton-Larty E."/>
            <person name="Palmer S.A."/>
            <person name="Pearce A.V."/>
            <person name="Peck A.I."/>
            <person name="Pelan S."/>
            <person name="Phillimore B."/>
            <person name="Porter K."/>
            <person name="Rice C.M."/>
            <person name="Rogosin A."/>
            <person name="Ross M.T."/>
            <person name="Sarafidou T."/>
            <person name="Sehra H.K."/>
            <person name="Shownkeen R."/>
            <person name="Skuce C.D."/>
            <person name="Smith M."/>
            <person name="Standring L."/>
            <person name="Sycamore N."/>
            <person name="Tester J."/>
            <person name="Thorpe A."/>
            <person name="Torcasso W."/>
            <person name="Tracey A."/>
            <person name="Tromans A."/>
            <person name="Tsolas J."/>
            <person name="Wall M."/>
            <person name="Walsh J."/>
            <person name="Wang H."/>
            <person name="Weinstock K."/>
            <person name="West A.P."/>
            <person name="Willey D.L."/>
            <person name="Whitehead S.L."/>
            <person name="Wilming L."/>
            <person name="Wray P.W."/>
            <person name="Young L."/>
            <person name="Chen Y."/>
            <person name="Lovering R.C."/>
            <person name="Moschonas N.K."/>
            <person name="Siebert R."/>
            <person name="Fechtel K."/>
            <person name="Bentley D."/>
            <person name="Durbin R.M."/>
            <person name="Hubbard T."/>
            <person name="Doucette-Stamm L."/>
            <person name="Beck S."/>
            <person name="Smith D.R."/>
            <person name="Rogers J."/>
        </authorList>
    </citation>
    <scope>NUCLEOTIDE SEQUENCE [LARGE SCALE GENOMIC DNA]</scope>
</reference>
<reference key="5">
    <citation type="journal article" date="2004" name="Genome Res.">
        <title>The status, quality, and expansion of the NIH full-length cDNA project: the Mammalian Gene Collection (MGC).</title>
        <authorList>
            <consortium name="The MGC Project Team"/>
        </authorList>
    </citation>
    <scope>NUCLEOTIDE SEQUENCE [LARGE SCALE MRNA] (ISOFORM 1)</scope>
    <source>
        <tissue>Brain</tissue>
    </source>
</reference>
<reference key="6">
    <citation type="journal article" date="1997" name="J. Biol. Chem.">
        <title>Cloning of the human prolyl 4-hydroxylase alpha subunit isoform alpha(II) and characterization of the type II enzyme tetramer. The alpha(I) and alpha(II) subunits do not form a mixed alpha(I)alpha(II)beta2 tetramer.</title>
        <authorList>
            <person name="Annunen P."/>
            <person name="Helaakoski T."/>
            <person name="Myllyharju J."/>
            <person name="Veijola J."/>
            <person name="Pihlajaniemi T."/>
            <person name="Kivirikko K.I."/>
        </authorList>
    </citation>
    <scope>FUNCTION</scope>
    <scope>CATALYTIC ACTIVITY</scope>
    <scope>ACTIVITY REGULATION</scope>
    <scope>BIOPHYSICOCHEMICAL PROPERTIES</scope>
    <scope>SUBUNIT</scope>
    <scope>COFACTOR</scope>
    <scope>TISSUE SPECIFICITY</scope>
</reference>
<reference key="7">
    <citation type="journal article" date="2009" name="J. Proteome Res.">
        <title>Glycoproteomics analysis of human liver tissue by combination of multiple enzyme digestion and hydrazide chemistry.</title>
        <authorList>
            <person name="Chen R."/>
            <person name="Jiang X."/>
            <person name="Sun D."/>
            <person name="Han G."/>
            <person name="Wang F."/>
            <person name="Ye M."/>
            <person name="Wang L."/>
            <person name="Zou H."/>
        </authorList>
    </citation>
    <scope>GLYCOSYLATION [LARGE SCALE ANALYSIS] AT ASN-113</scope>
    <source>
        <tissue>Liver</tissue>
    </source>
</reference>
<reference key="8">
    <citation type="journal article" date="2011" name="BMC Syst. Biol.">
        <title>Initial characterization of the human central proteome.</title>
        <authorList>
            <person name="Burkard T.R."/>
            <person name="Planyavsky M."/>
            <person name="Kaupe I."/>
            <person name="Breitwieser F.P."/>
            <person name="Buerckstuemmer T."/>
            <person name="Bennett K.L."/>
            <person name="Superti-Furga G."/>
            <person name="Colinge J."/>
        </authorList>
    </citation>
    <scope>IDENTIFICATION BY MASS SPECTROMETRY [LARGE SCALE ANALYSIS]</scope>
</reference>
<reference key="9">
    <citation type="journal article" date="2014" name="J. Proteomics">
        <title>An enzyme assisted RP-RPLC approach for in-depth analysis of human liver phosphoproteome.</title>
        <authorList>
            <person name="Bian Y."/>
            <person name="Song C."/>
            <person name="Cheng K."/>
            <person name="Dong M."/>
            <person name="Wang F."/>
            <person name="Huang J."/>
            <person name="Sun D."/>
            <person name="Wang L."/>
            <person name="Ye M."/>
            <person name="Zou H."/>
        </authorList>
    </citation>
    <scope>IDENTIFICATION BY MASS SPECTROMETRY [LARGE SCALE ANALYSIS]</scope>
    <source>
        <tissue>Liver</tissue>
    </source>
</reference>
<reference key="10">
    <citation type="journal article" date="2015" name="Proteomics">
        <title>N-terminome analysis of the human mitochondrial proteome.</title>
        <authorList>
            <person name="Vaca Jacome A.S."/>
            <person name="Rabilloud T."/>
            <person name="Schaeffer-Reiss C."/>
            <person name="Rompais M."/>
            <person name="Ayoub D."/>
            <person name="Lane L."/>
            <person name="Bairoch A."/>
            <person name="Van Dorsselaer A."/>
            <person name="Carapito C."/>
        </authorList>
    </citation>
    <scope>CLEAVAGE OF SIGNAL PEPTIDE [LARGE SCALE ANALYSIS] AFTER ALA-17</scope>
    <scope>IDENTIFICATION BY MASS SPECTROMETRY [LARGE SCALE ANALYSIS]</scope>
</reference>
<reference key="11">
    <citation type="journal article" date="2004" name="J. Biol. Chem.">
        <title>The peptide-substrate-binding domain of collagen prolyl 4-hydroxylases is a tetratricopeptide repeat domain with functional aromatic residues.</title>
        <authorList>
            <person name="Pekkala M."/>
            <person name="Hieta R."/>
            <person name="Bergmann U."/>
            <person name="Kivirikko K.I."/>
            <person name="Wierenga R.K."/>
            <person name="Myllyharju J."/>
        </authorList>
    </citation>
    <scope>X-RAY CRYSTALLOGRAPHY (2.3 ANGSTROMS) OF 161-261</scope>
    <scope>SUBUNIT</scope>
    <scope>MUTAGENESIS OF TYR-210; TYR-213 AND TYR-247</scope>
</reference>
<organism>
    <name type="scientific">Homo sapiens</name>
    <name type="common">Human</name>
    <dbReference type="NCBI Taxonomy" id="9606"/>
    <lineage>
        <taxon>Eukaryota</taxon>
        <taxon>Metazoa</taxon>
        <taxon>Chordata</taxon>
        <taxon>Craniata</taxon>
        <taxon>Vertebrata</taxon>
        <taxon>Euteleostomi</taxon>
        <taxon>Mammalia</taxon>
        <taxon>Eutheria</taxon>
        <taxon>Euarchontoglires</taxon>
        <taxon>Primates</taxon>
        <taxon>Haplorrhini</taxon>
        <taxon>Catarrhini</taxon>
        <taxon>Hominidae</taxon>
        <taxon>Homo</taxon>
    </lineage>
</organism>
<comment type="function">
    <text evidence="4">Catalyzes the post-translational formation of 4-hydroxyproline in -Xaa-Pro-Gly- sequences in collagens and other proteins.</text>
</comment>
<comment type="catalytic activity">
    <reaction evidence="4">
        <text>L-prolyl-[collagen] + 2-oxoglutarate + O2 = trans-4-hydroxy-L-prolyl-[collagen] + succinate + CO2</text>
        <dbReference type="Rhea" id="RHEA:18945"/>
        <dbReference type="Rhea" id="RHEA-COMP:11676"/>
        <dbReference type="Rhea" id="RHEA-COMP:11680"/>
        <dbReference type="ChEBI" id="CHEBI:15379"/>
        <dbReference type="ChEBI" id="CHEBI:16526"/>
        <dbReference type="ChEBI" id="CHEBI:16810"/>
        <dbReference type="ChEBI" id="CHEBI:30031"/>
        <dbReference type="ChEBI" id="CHEBI:50342"/>
        <dbReference type="ChEBI" id="CHEBI:61965"/>
        <dbReference type="EC" id="1.14.11.2"/>
    </reaction>
</comment>
<comment type="cofactor">
    <cofactor evidence="8">
        <name>Fe(2+)</name>
        <dbReference type="ChEBI" id="CHEBI:29033"/>
    </cofactor>
    <text>Binds 1 Fe(2+) ion per subunit.</text>
</comment>
<comment type="cofactor">
    <cofactor evidence="8">
        <name>L-ascorbate</name>
        <dbReference type="ChEBI" id="CHEBI:38290"/>
    </cofactor>
</comment>
<comment type="activity regulation">
    <text evidence="4">Inhibited by poly(L-proline).</text>
</comment>
<comment type="biophysicochemical properties">
    <kinetics>
        <KM evidence="4">22 uM for 2-oxoglutarate</KM>
    </kinetics>
</comment>
<comment type="subunit">
    <text evidence="2 4">Heterotetramer of two alpha-1 chains and two beta chains (P4HB)(the beta chain is the multi-functional PDI), where P4HB plays the role of a structural subunit; this tetramer catalyzes the formation of 4-hydroxyproline in collagen.</text>
</comment>
<comment type="interaction">
    <interactant intactId="EBI-1237386">
        <id>P13674</id>
    </interactant>
    <interactant intactId="EBI-466029">
        <id>P42858</id>
        <label>HTT</label>
    </interactant>
    <organismsDiffer>false</organismsDiffer>
    <experiments>5</experiments>
</comment>
<comment type="interaction">
    <interactant intactId="EBI-1237386">
        <id>P13674</id>
    </interactant>
    <interactant intactId="EBI-1237386">
        <id>P13674</id>
        <label>P4HA1</label>
    </interactant>
    <organismsDiffer>false</organismsDiffer>
    <experiments>5</experiments>
</comment>
<comment type="subcellular location">
    <subcellularLocation>
        <location>Endoplasmic reticulum lumen</location>
    </subcellularLocation>
</comment>
<comment type="alternative products">
    <event type="alternative splicing"/>
    <isoform>
        <id>P13674-1</id>
        <name>1</name>
        <sequence type="displayed"/>
    </isoform>
    <isoform>
        <id>P13674-2</id>
        <name>2</name>
        <sequence type="described" ref="VSP_004504"/>
    </isoform>
    <isoform>
        <id>P13674-3</id>
        <name>3</name>
        <sequence type="described" ref="VSP_004504 VSP_044578"/>
    </isoform>
</comment>
<comment type="tissue specificity">
    <text evidence="4">Expressed in the heart, liver, skeletal muscle, kidney, placenta, lung and pancreas.</text>
</comment>
<comment type="similarity">
    <text evidence="7">Belongs to the P4HA family.</text>
</comment>
<protein>
    <recommendedName>
        <fullName>Prolyl 4-hydroxylase subunit alpha-1</fullName>
        <shortName>4-PH alpha-1</shortName>
        <ecNumber evidence="4">1.14.11.2</ecNumber>
    </recommendedName>
    <alternativeName>
        <fullName>Procollagen-proline,2-oxoglutarate-4-dioxygenase subunit alpha-1</fullName>
    </alternativeName>
</protein>
<accession>P13674</accession>
<accession>C9JL12</accession>
<accession>Q15082</accession>
<accession>Q15083</accession>
<accession>Q5VSQ5</accession>
<gene>
    <name type="primary">P4HA1</name>
    <name type="synonym">P4HA</name>
</gene>
<name>P4HA1_HUMAN</name>
<sequence length="534" mass="61049">MIWYILIIGILLPQSLAHPGFFTSIGQMTDLIHTEKDLVTSLKDYIKAEEDKLEQIKKWAEKLDRLTSTATKDPEGFVGHPVNAFKLMKRLNTEWSELENLVLKDMSDGFISNLTIQRQYFPNDEDQVGAAKALLRLQDTYNLDTDTISKGNLPGVKHKSFLTAEDCFELGKVAYTEADYYHTELWMEQALRQLDEGEISTIDKVSVLDYLSYAVYQQGDLDKALLLTKKLLELDPEHQRANGNLKYFEYIMAKEKDVNKSASDDQSDQKTTPKKKGVAVDYLPERQKYEMLCRGEGIKMTPRRQKKLFCRYHDGNRNPKFILAPAKQEDEWDKPRIIRFHDIISDAEIEIVKDLAKPRLRRATISNPITGDLETVHYRISKSAWLSGYENPVVSRINMRIQDLTGLDVSTAEELQVANYGVGGQYEPHFDFARKDEPDAFKELGTGNRIATWLFYMSDVSAGGATVFPEVGASVWPKKGTAVFWYNLFASGEGDYSTRHAACPVLVGNKWVSNKWLHERGQEFRRPCTLSELE</sequence>